<name>NUOB_FRAP2</name>
<keyword id="KW-0004">4Fe-4S</keyword>
<keyword id="KW-0997">Cell inner membrane</keyword>
<keyword id="KW-1003">Cell membrane</keyword>
<keyword id="KW-0408">Iron</keyword>
<keyword id="KW-0411">Iron-sulfur</keyword>
<keyword id="KW-0472">Membrane</keyword>
<keyword id="KW-0479">Metal-binding</keyword>
<keyword id="KW-0520">NAD</keyword>
<keyword id="KW-0874">Quinone</keyword>
<keyword id="KW-1278">Translocase</keyword>
<keyword id="KW-0813">Transport</keyword>
<keyword id="KW-0830">Ubiquinone</keyword>
<feature type="chain" id="PRO_0000376226" description="NADH-quinone oxidoreductase subunit B">
    <location>
        <begin position="1"/>
        <end position="158"/>
    </location>
</feature>
<feature type="binding site" evidence="1">
    <location>
        <position position="36"/>
    </location>
    <ligand>
        <name>[4Fe-4S] cluster</name>
        <dbReference type="ChEBI" id="CHEBI:49883"/>
    </ligand>
</feature>
<feature type="binding site" evidence="1">
    <location>
        <position position="37"/>
    </location>
    <ligand>
        <name>[4Fe-4S] cluster</name>
        <dbReference type="ChEBI" id="CHEBI:49883"/>
    </ligand>
</feature>
<feature type="binding site" evidence="1">
    <location>
        <position position="101"/>
    </location>
    <ligand>
        <name>[4Fe-4S] cluster</name>
        <dbReference type="ChEBI" id="CHEBI:49883"/>
    </ligand>
</feature>
<feature type="binding site" evidence="1">
    <location>
        <position position="131"/>
    </location>
    <ligand>
        <name>[4Fe-4S] cluster</name>
        <dbReference type="ChEBI" id="CHEBI:49883"/>
    </ligand>
</feature>
<sequence length="158" mass="17272">MGIGNENKGFITASADALINWVRTGSLWPVTTGLACCAVEMMHAGAARYDLDRFGIVFRPSPRQSDVLIVAGTLCNKMAPALRQVYDQMPDPKWVISMGSCANGGGYYHYSYSVVRGCDRIIPVDIYVPGCPPTAEALVYGIIQLQNKIIRKDTIARK</sequence>
<reference key="1">
    <citation type="submission" date="2007-12" db="EMBL/GenBank/DDBJ databases">
        <title>Complete sequence of chromosome of Francisella philomiragia subsp. philomiragia ATCC 25017.</title>
        <authorList>
            <consortium name="US DOE Joint Genome Institute"/>
            <person name="Copeland A."/>
            <person name="Lucas S."/>
            <person name="Lapidus A."/>
            <person name="Barry K."/>
            <person name="Detter J.C."/>
            <person name="Glavina del Rio T."/>
            <person name="Hammon N."/>
            <person name="Israni S."/>
            <person name="Dalin E."/>
            <person name="Tice H."/>
            <person name="Pitluck S."/>
            <person name="Chain P."/>
            <person name="Malfatti S."/>
            <person name="Shin M."/>
            <person name="Vergez L."/>
            <person name="Schmutz J."/>
            <person name="Larimer F."/>
            <person name="Land M."/>
            <person name="Hauser L."/>
            <person name="Richardson P."/>
        </authorList>
    </citation>
    <scope>NUCLEOTIDE SEQUENCE [LARGE SCALE GENOMIC DNA]</scope>
    <source>
        <strain>ATCC 25017 / CCUG 19701 / FSC 153 / O#319-036</strain>
    </source>
</reference>
<dbReference type="EC" id="7.1.1.-" evidence="1"/>
<dbReference type="EMBL" id="CP000937">
    <property type="protein sequence ID" value="ABZ87153.1"/>
    <property type="molecule type" value="Genomic_DNA"/>
</dbReference>
<dbReference type="SMR" id="B0TWP5"/>
<dbReference type="KEGG" id="fph:Fphi_0930"/>
<dbReference type="eggNOG" id="COG0377">
    <property type="taxonomic scope" value="Bacteria"/>
</dbReference>
<dbReference type="HOGENOM" id="CLU_055737_7_3_6"/>
<dbReference type="GO" id="GO:0005886">
    <property type="term" value="C:plasma membrane"/>
    <property type="evidence" value="ECO:0007669"/>
    <property type="project" value="UniProtKB-SubCell"/>
</dbReference>
<dbReference type="GO" id="GO:0045271">
    <property type="term" value="C:respiratory chain complex I"/>
    <property type="evidence" value="ECO:0007669"/>
    <property type="project" value="TreeGrafter"/>
</dbReference>
<dbReference type="GO" id="GO:0051539">
    <property type="term" value="F:4 iron, 4 sulfur cluster binding"/>
    <property type="evidence" value="ECO:0007669"/>
    <property type="project" value="UniProtKB-KW"/>
</dbReference>
<dbReference type="GO" id="GO:0005506">
    <property type="term" value="F:iron ion binding"/>
    <property type="evidence" value="ECO:0007669"/>
    <property type="project" value="UniProtKB-UniRule"/>
</dbReference>
<dbReference type="GO" id="GO:0008137">
    <property type="term" value="F:NADH dehydrogenase (ubiquinone) activity"/>
    <property type="evidence" value="ECO:0007669"/>
    <property type="project" value="InterPro"/>
</dbReference>
<dbReference type="GO" id="GO:0050136">
    <property type="term" value="F:NADH:ubiquinone reductase (non-electrogenic) activity"/>
    <property type="evidence" value="ECO:0007669"/>
    <property type="project" value="UniProtKB-UniRule"/>
</dbReference>
<dbReference type="GO" id="GO:0048038">
    <property type="term" value="F:quinone binding"/>
    <property type="evidence" value="ECO:0007669"/>
    <property type="project" value="UniProtKB-KW"/>
</dbReference>
<dbReference type="GO" id="GO:0009060">
    <property type="term" value="P:aerobic respiration"/>
    <property type="evidence" value="ECO:0007669"/>
    <property type="project" value="TreeGrafter"/>
</dbReference>
<dbReference type="GO" id="GO:0015990">
    <property type="term" value="P:electron transport coupled proton transport"/>
    <property type="evidence" value="ECO:0007669"/>
    <property type="project" value="TreeGrafter"/>
</dbReference>
<dbReference type="FunFam" id="3.40.50.12280:FF:000001">
    <property type="entry name" value="NADH-quinone oxidoreductase subunit B 2"/>
    <property type="match status" value="1"/>
</dbReference>
<dbReference type="Gene3D" id="3.40.50.12280">
    <property type="match status" value="1"/>
</dbReference>
<dbReference type="HAMAP" id="MF_01356">
    <property type="entry name" value="NDH1_NuoB"/>
    <property type="match status" value="1"/>
</dbReference>
<dbReference type="InterPro" id="IPR006137">
    <property type="entry name" value="NADH_UbQ_OxRdtase-like_20kDa"/>
</dbReference>
<dbReference type="InterPro" id="IPR006138">
    <property type="entry name" value="NADH_UQ_OxRdtase_20Kd_su"/>
</dbReference>
<dbReference type="NCBIfam" id="TIGR01957">
    <property type="entry name" value="nuoB_fam"/>
    <property type="match status" value="1"/>
</dbReference>
<dbReference type="NCBIfam" id="NF005012">
    <property type="entry name" value="PRK06411.1"/>
    <property type="match status" value="1"/>
</dbReference>
<dbReference type="PANTHER" id="PTHR11995">
    <property type="entry name" value="NADH DEHYDROGENASE"/>
    <property type="match status" value="1"/>
</dbReference>
<dbReference type="PANTHER" id="PTHR11995:SF14">
    <property type="entry name" value="NADH DEHYDROGENASE [UBIQUINONE] IRON-SULFUR PROTEIN 7, MITOCHONDRIAL"/>
    <property type="match status" value="1"/>
</dbReference>
<dbReference type="Pfam" id="PF01058">
    <property type="entry name" value="Oxidored_q6"/>
    <property type="match status" value="1"/>
</dbReference>
<dbReference type="SUPFAM" id="SSF56770">
    <property type="entry name" value="HydA/Nqo6-like"/>
    <property type="match status" value="1"/>
</dbReference>
<dbReference type="PROSITE" id="PS01150">
    <property type="entry name" value="COMPLEX1_20K"/>
    <property type="match status" value="1"/>
</dbReference>
<gene>
    <name evidence="1" type="primary">nuoB</name>
    <name type="ordered locus">Fphi_0930</name>
</gene>
<protein>
    <recommendedName>
        <fullName evidence="1">NADH-quinone oxidoreductase subunit B</fullName>
        <ecNumber evidence="1">7.1.1.-</ecNumber>
    </recommendedName>
    <alternativeName>
        <fullName evidence="1">NADH dehydrogenase I subunit B</fullName>
    </alternativeName>
    <alternativeName>
        <fullName evidence="1">NDH-1 subunit B</fullName>
    </alternativeName>
</protein>
<organism>
    <name type="scientific">Francisella philomiragia subsp. philomiragia (strain ATCC 25017 / CCUG 19701 / FSC 153 / O#319-036)</name>
    <dbReference type="NCBI Taxonomy" id="484022"/>
    <lineage>
        <taxon>Bacteria</taxon>
        <taxon>Pseudomonadati</taxon>
        <taxon>Pseudomonadota</taxon>
        <taxon>Gammaproteobacteria</taxon>
        <taxon>Thiotrichales</taxon>
        <taxon>Francisellaceae</taxon>
        <taxon>Francisella</taxon>
    </lineage>
</organism>
<comment type="function">
    <text evidence="1">NDH-1 shuttles electrons from NADH, via FMN and iron-sulfur (Fe-S) centers, to quinones in the respiratory chain. The immediate electron acceptor for the enzyme in this species is believed to be ubiquinone. Couples the redox reaction to proton translocation (for every two electrons transferred, four hydrogen ions are translocated across the cytoplasmic membrane), and thus conserves the redox energy in a proton gradient.</text>
</comment>
<comment type="catalytic activity">
    <reaction evidence="1">
        <text>a quinone + NADH + 5 H(+)(in) = a quinol + NAD(+) + 4 H(+)(out)</text>
        <dbReference type="Rhea" id="RHEA:57888"/>
        <dbReference type="ChEBI" id="CHEBI:15378"/>
        <dbReference type="ChEBI" id="CHEBI:24646"/>
        <dbReference type="ChEBI" id="CHEBI:57540"/>
        <dbReference type="ChEBI" id="CHEBI:57945"/>
        <dbReference type="ChEBI" id="CHEBI:132124"/>
    </reaction>
</comment>
<comment type="cofactor">
    <cofactor evidence="1">
        <name>[4Fe-4S] cluster</name>
        <dbReference type="ChEBI" id="CHEBI:49883"/>
    </cofactor>
    <text evidence="1">Binds 1 [4Fe-4S] cluster.</text>
</comment>
<comment type="subunit">
    <text evidence="1">NDH-1 is composed of 14 different subunits. Subunits NuoB, C, D, E, F, and G constitute the peripheral sector of the complex.</text>
</comment>
<comment type="subcellular location">
    <subcellularLocation>
        <location evidence="1">Cell inner membrane</location>
        <topology evidence="1">Peripheral membrane protein</topology>
        <orientation evidence="1">Cytoplasmic side</orientation>
    </subcellularLocation>
</comment>
<comment type="similarity">
    <text evidence="1">Belongs to the complex I 20 kDa subunit family.</text>
</comment>
<evidence type="ECO:0000255" key="1">
    <source>
        <dbReference type="HAMAP-Rule" id="MF_01356"/>
    </source>
</evidence>
<proteinExistence type="inferred from homology"/>
<accession>B0TWP5</accession>